<keyword id="KW-0067">ATP-binding</keyword>
<keyword id="KW-0143">Chaperone</keyword>
<keyword id="KW-0963">Cytoplasm</keyword>
<keyword id="KW-0547">Nucleotide-binding</keyword>
<keyword id="KW-1185">Reference proteome</keyword>
<organism>
    <name type="scientific">Schizosaccharomyces pombe (strain 972 / ATCC 24843)</name>
    <name type="common">Fission yeast</name>
    <dbReference type="NCBI Taxonomy" id="284812"/>
    <lineage>
        <taxon>Eukaryota</taxon>
        <taxon>Fungi</taxon>
        <taxon>Dikarya</taxon>
        <taxon>Ascomycota</taxon>
        <taxon>Taphrinomycotina</taxon>
        <taxon>Schizosaccharomycetes</taxon>
        <taxon>Schizosaccharomycetales</taxon>
        <taxon>Schizosaccharomycetaceae</taxon>
        <taxon>Schizosaccharomyces</taxon>
    </lineage>
</organism>
<comment type="function">
    <text evidence="1">Molecular chaperone; assists the folding of proteins upon ATP hydrolysis. Known to play a role, in vitro, in the folding of actin and tubulin (By similarity).</text>
</comment>
<comment type="subunit">
    <text evidence="2">Heterooligomeric complex of about 850 to 900 kDa that forms two stacked rings, 12 to 16 nm in diameter.</text>
</comment>
<comment type="subcellular location">
    <subcellularLocation>
        <location evidence="2">Cytoplasm</location>
    </subcellularLocation>
</comment>
<comment type="similarity">
    <text evidence="2">Belongs to the TCP-1 chaperonin family.</text>
</comment>
<protein>
    <recommendedName>
        <fullName>T-complex protein 1 subunit delta</fullName>
        <shortName>TCP-1-delta</shortName>
    </recommendedName>
    <alternativeName>
        <fullName>CCT-delta</fullName>
    </alternativeName>
</protein>
<accession>P50999</accession>
<accession>O59929</accession>
<accession>Q9URV5</accession>
<evidence type="ECO:0000250" key="1"/>
<evidence type="ECO:0000305" key="2"/>
<dbReference type="EMBL" id="AF050465">
    <property type="protein sequence ID" value="AAC05213.1"/>
    <property type="molecule type" value="mRNA"/>
</dbReference>
<dbReference type="EMBL" id="CU329671">
    <property type="protein sequence ID" value="CAB53722.1"/>
    <property type="molecule type" value="Genomic_DNA"/>
</dbReference>
<dbReference type="EMBL" id="X91498">
    <property type="protein sequence ID" value="CAA62798.1"/>
    <property type="molecule type" value="Genomic_DNA"/>
</dbReference>
<dbReference type="PIR" id="T39263">
    <property type="entry name" value="T39263"/>
</dbReference>
<dbReference type="PIR" id="T43649">
    <property type="entry name" value="T43649"/>
</dbReference>
<dbReference type="RefSeq" id="NP_595155.1">
    <property type="nucleotide sequence ID" value="NM_001021064.2"/>
</dbReference>
<dbReference type="SMR" id="P50999"/>
<dbReference type="BioGRID" id="276591">
    <property type="interactions" value="12"/>
</dbReference>
<dbReference type="FunCoup" id="P50999">
    <property type="interactions" value="863"/>
</dbReference>
<dbReference type="IntAct" id="P50999">
    <property type="interactions" value="2"/>
</dbReference>
<dbReference type="STRING" id="284812.P50999"/>
<dbReference type="iPTMnet" id="P50999"/>
<dbReference type="PaxDb" id="4896-SPBC106.06.1"/>
<dbReference type="EnsemblFungi" id="SPBC106.06.1">
    <property type="protein sequence ID" value="SPBC106.06.1:pep"/>
    <property type="gene ID" value="SPBC106.06"/>
</dbReference>
<dbReference type="GeneID" id="2540053"/>
<dbReference type="KEGG" id="spo:2540053"/>
<dbReference type="PomBase" id="SPBC106.06">
    <property type="gene designation" value="cct4"/>
</dbReference>
<dbReference type="VEuPathDB" id="FungiDB:SPBC106.06"/>
<dbReference type="eggNOG" id="KOG0358">
    <property type="taxonomic scope" value="Eukaryota"/>
</dbReference>
<dbReference type="HOGENOM" id="CLU_008891_9_1_1"/>
<dbReference type="InParanoid" id="P50999"/>
<dbReference type="OMA" id="HPAANMI"/>
<dbReference type="PhylomeDB" id="P50999"/>
<dbReference type="Reactome" id="R-SPO-390471">
    <property type="pathway name" value="Association of TriC/CCT with target proteins during biosynthesis"/>
</dbReference>
<dbReference type="Reactome" id="R-SPO-6814122">
    <property type="pathway name" value="Cooperation of PDCL (PhLP1) and TRiC/CCT in G-protein beta folding"/>
</dbReference>
<dbReference type="PRO" id="PR:P50999"/>
<dbReference type="Proteomes" id="UP000002485">
    <property type="component" value="Chromosome II"/>
</dbReference>
<dbReference type="GO" id="GO:0005832">
    <property type="term" value="C:chaperonin-containing T-complex"/>
    <property type="evidence" value="ECO:0000314"/>
    <property type="project" value="PomBase"/>
</dbReference>
<dbReference type="GO" id="GO:0005856">
    <property type="term" value="C:cytoskeleton"/>
    <property type="evidence" value="ECO:0000266"/>
    <property type="project" value="PomBase"/>
</dbReference>
<dbReference type="GO" id="GO:0005829">
    <property type="term" value="C:cytosol"/>
    <property type="evidence" value="ECO:0007005"/>
    <property type="project" value="PomBase"/>
</dbReference>
<dbReference type="GO" id="GO:0005634">
    <property type="term" value="C:nucleus"/>
    <property type="evidence" value="ECO:0007005"/>
    <property type="project" value="PomBase"/>
</dbReference>
<dbReference type="GO" id="GO:0005524">
    <property type="term" value="F:ATP binding"/>
    <property type="evidence" value="ECO:0000255"/>
    <property type="project" value="PomBase"/>
</dbReference>
<dbReference type="GO" id="GO:0016887">
    <property type="term" value="F:ATP hydrolysis activity"/>
    <property type="evidence" value="ECO:0007669"/>
    <property type="project" value="InterPro"/>
</dbReference>
<dbReference type="GO" id="GO:0140662">
    <property type="term" value="F:ATP-dependent protein folding chaperone"/>
    <property type="evidence" value="ECO:0007669"/>
    <property type="project" value="InterPro"/>
</dbReference>
<dbReference type="GO" id="GO:0051082">
    <property type="term" value="F:unfolded protein binding"/>
    <property type="evidence" value="ECO:0000318"/>
    <property type="project" value="GO_Central"/>
</dbReference>
<dbReference type="GO" id="GO:0006457">
    <property type="term" value="P:protein folding"/>
    <property type="evidence" value="ECO:0000318"/>
    <property type="project" value="GO_Central"/>
</dbReference>
<dbReference type="CDD" id="cd03338">
    <property type="entry name" value="TCP1_delta"/>
    <property type="match status" value="1"/>
</dbReference>
<dbReference type="FunFam" id="3.50.7.10:FF:000010">
    <property type="entry name" value="T-complex protein 1 subunit delta"/>
    <property type="match status" value="1"/>
</dbReference>
<dbReference type="Gene3D" id="3.50.7.10">
    <property type="entry name" value="GroEL"/>
    <property type="match status" value="1"/>
</dbReference>
<dbReference type="Gene3D" id="1.10.560.10">
    <property type="entry name" value="GroEL-like equatorial domain"/>
    <property type="match status" value="1"/>
</dbReference>
<dbReference type="Gene3D" id="3.30.260.10">
    <property type="entry name" value="TCP-1-like chaperonin intermediate domain"/>
    <property type="match status" value="1"/>
</dbReference>
<dbReference type="InterPro" id="IPR012717">
    <property type="entry name" value="Chap_CCT_delta"/>
</dbReference>
<dbReference type="InterPro" id="IPR017998">
    <property type="entry name" value="Chaperone_TCP-1"/>
</dbReference>
<dbReference type="InterPro" id="IPR002194">
    <property type="entry name" value="Chaperonin_TCP-1_CS"/>
</dbReference>
<dbReference type="InterPro" id="IPR002423">
    <property type="entry name" value="Cpn60/GroEL/TCP-1"/>
</dbReference>
<dbReference type="InterPro" id="IPR027409">
    <property type="entry name" value="GroEL-like_apical_dom_sf"/>
</dbReference>
<dbReference type="InterPro" id="IPR027413">
    <property type="entry name" value="GROEL-like_equatorial_sf"/>
</dbReference>
<dbReference type="InterPro" id="IPR027410">
    <property type="entry name" value="TCP-1-like_intermed_sf"/>
</dbReference>
<dbReference type="InterPro" id="IPR053374">
    <property type="entry name" value="TCP-1_chaperonin"/>
</dbReference>
<dbReference type="InterPro" id="IPR054827">
    <property type="entry name" value="thermosome_alpha"/>
</dbReference>
<dbReference type="NCBIfam" id="TIGR02342">
    <property type="entry name" value="chap_CCT_delta"/>
    <property type="match status" value="1"/>
</dbReference>
<dbReference type="NCBIfam" id="NF041082">
    <property type="entry name" value="thermosome_alpha"/>
    <property type="match status" value="1"/>
</dbReference>
<dbReference type="NCBIfam" id="NF041083">
    <property type="entry name" value="thermosome_beta"/>
    <property type="match status" value="1"/>
</dbReference>
<dbReference type="PANTHER" id="PTHR11353">
    <property type="entry name" value="CHAPERONIN"/>
    <property type="match status" value="1"/>
</dbReference>
<dbReference type="Pfam" id="PF00118">
    <property type="entry name" value="Cpn60_TCP1"/>
    <property type="match status" value="1"/>
</dbReference>
<dbReference type="PRINTS" id="PR00304">
    <property type="entry name" value="TCOMPLEXTCP1"/>
</dbReference>
<dbReference type="SUPFAM" id="SSF52029">
    <property type="entry name" value="GroEL apical domain-like"/>
    <property type="match status" value="1"/>
</dbReference>
<dbReference type="SUPFAM" id="SSF48592">
    <property type="entry name" value="GroEL equatorial domain-like"/>
    <property type="match status" value="1"/>
</dbReference>
<dbReference type="SUPFAM" id="SSF54849">
    <property type="entry name" value="GroEL-intermediate domain like"/>
    <property type="match status" value="1"/>
</dbReference>
<dbReference type="PROSITE" id="PS00750">
    <property type="entry name" value="TCP1_1"/>
    <property type="match status" value="1"/>
</dbReference>
<dbReference type="PROSITE" id="PS00751">
    <property type="entry name" value="TCP1_2"/>
    <property type="match status" value="1"/>
</dbReference>
<dbReference type="PROSITE" id="PS00995">
    <property type="entry name" value="TCP1_3"/>
    <property type="match status" value="1"/>
</dbReference>
<proteinExistence type="evidence at transcript level"/>
<reference key="1">
    <citation type="submission" date="1998-02" db="EMBL/GenBank/DDBJ databases">
        <authorList>
            <person name="Mueller U.W."/>
            <person name="Sazer S."/>
        </authorList>
    </citation>
    <scope>NUCLEOTIDE SEQUENCE [MRNA]</scope>
    <source>
        <strain>972 / ATCC 24843</strain>
    </source>
</reference>
<reference key="2">
    <citation type="journal article" date="2002" name="Nature">
        <title>The genome sequence of Schizosaccharomyces pombe.</title>
        <authorList>
            <person name="Wood V."/>
            <person name="Gwilliam R."/>
            <person name="Rajandream M.A."/>
            <person name="Lyne M.H."/>
            <person name="Lyne R."/>
            <person name="Stewart A."/>
            <person name="Sgouros J.G."/>
            <person name="Peat N."/>
            <person name="Hayles J."/>
            <person name="Baker S.G."/>
            <person name="Basham D."/>
            <person name="Bowman S."/>
            <person name="Brooks K."/>
            <person name="Brown D."/>
            <person name="Brown S."/>
            <person name="Chillingworth T."/>
            <person name="Churcher C.M."/>
            <person name="Collins M."/>
            <person name="Connor R."/>
            <person name="Cronin A."/>
            <person name="Davis P."/>
            <person name="Feltwell T."/>
            <person name="Fraser A."/>
            <person name="Gentles S."/>
            <person name="Goble A."/>
            <person name="Hamlin N."/>
            <person name="Harris D.E."/>
            <person name="Hidalgo J."/>
            <person name="Hodgson G."/>
            <person name="Holroyd S."/>
            <person name="Hornsby T."/>
            <person name="Howarth S."/>
            <person name="Huckle E.J."/>
            <person name="Hunt S."/>
            <person name="Jagels K."/>
            <person name="James K.D."/>
            <person name="Jones L."/>
            <person name="Jones M."/>
            <person name="Leather S."/>
            <person name="McDonald S."/>
            <person name="McLean J."/>
            <person name="Mooney P."/>
            <person name="Moule S."/>
            <person name="Mungall K.L."/>
            <person name="Murphy L.D."/>
            <person name="Niblett D."/>
            <person name="Odell C."/>
            <person name="Oliver K."/>
            <person name="O'Neil S."/>
            <person name="Pearson D."/>
            <person name="Quail M.A."/>
            <person name="Rabbinowitsch E."/>
            <person name="Rutherford K.M."/>
            <person name="Rutter S."/>
            <person name="Saunders D."/>
            <person name="Seeger K."/>
            <person name="Sharp S."/>
            <person name="Skelton J."/>
            <person name="Simmonds M.N."/>
            <person name="Squares R."/>
            <person name="Squares S."/>
            <person name="Stevens K."/>
            <person name="Taylor K."/>
            <person name="Taylor R.G."/>
            <person name="Tivey A."/>
            <person name="Walsh S.V."/>
            <person name="Warren T."/>
            <person name="Whitehead S."/>
            <person name="Woodward J.R."/>
            <person name="Volckaert G."/>
            <person name="Aert R."/>
            <person name="Robben J."/>
            <person name="Grymonprez B."/>
            <person name="Weltjens I."/>
            <person name="Vanstreels E."/>
            <person name="Rieger M."/>
            <person name="Schaefer M."/>
            <person name="Mueller-Auer S."/>
            <person name="Gabel C."/>
            <person name="Fuchs M."/>
            <person name="Duesterhoeft A."/>
            <person name="Fritzc C."/>
            <person name="Holzer E."/>
            <person name="Moestl D."/>
            <person name="Hilbert H."/>
            <person name="Borzym K."/>
            <person name="Langer I."/>
            <person name="Beck A."/>
            <person name="Lehrach H."/>
            <person name="Reinhardt R."/>
            <person name="Pohl T.M."/>
            <person name="Eger P."/>
            <person name="Zimmermann W."/>
            <person name="Wedler H."/>
            <person name="Wambutt R."/>
            <person name="Purnelle B."/>
            <person name="Goffeau A."/>
            <person name="Cadieu E."/>
            <person name="Dreano S."/>
            <person name="Gloux S."/>
            <person name="Lelaure V."/>
            <person name="Mottier S."/>
            <person name="Galibert F."/>
            <person name="Aves S.J."/>
            <person name="Xiang Z."/>
            <person name="Hunt C."/>
            <person name="Moore K."/>
            <person name="Hurst S.M."/>
            <person name="Lucas M."/>
            <person name="Rochet M."/>
            <person name="Gaillardin C."/>
            <person name="Tallada V.A."/>
            <person name="Garzon A."/>
            <person name="Thode G."/>
            <person name="Daga R.R."/>
            <person name="Cruzado L."/>
            <person name="Jimenez J."/>
            <person name="Sanchez M."/>
            <person name="del Rey F."/>
            <person name="Benito J."/>
            <person name="Dominguez A."/>
            <person name="Revuelta J.L."/>
            <person name="Moreno S."/>
            <person name="Armstrong J."/>
            <person name="Forsburg S.L."/>
            <person name="Cerutti L."/>
            <person name="Lowe T."/>
            <person name="McCombie W.R."/>
            <person name="Paulsen I."/>
            <person name="Potashkin J."/>
            <person name="Shpakovski G.V."/>
            <person name="Ussery D."/>
            <person name="Barrell B.G."/>
            <person name="Nurse P."/>
        </authorList>
    </citation>
    <scope>NUCLEOTIDE SEQUENCE [LARGE SCALE GENOMIC DNA]</scope>
    <source>
        <strain>972 / ATCC 24843</strain>
    </source>
</reference>
<reference key="3">
    <citation type="submission" date="1995-09" db="EMBL/GenBank/DDBJ databases">
        <authorList>
            <person name="Rochet M."/>
            <person name="Levesque H."/>
            <person name="Gaillardin C."/>
        </authorList>
    </citation>
    <scope>NUCLEOTIDE SEQUENCE [GENOMIC DNA] OF 1-102</scope>
    <source>
        <strain>972 / ATCC 24843</strain>
    </source>
</reference>
<name>TCPD_SCHPO</name>
<sequence>MSKAATVPVAFQDREKPQEVRLSNIMAARSVADAIRTSLGPKGMDKMIQTGKGEVILTNDGATILKHLSVLHPAAKMLVDLSAAQDVEAGDGTTSVVILAGSMLACAEKLLKKGIHPTVIAESFQRAAGFTVDCMKENALAIELSDRESLLRAATTSLNSKIVSQYSNLLAPIAVDAVLKVIDPRVATNVDLKDIRIVKKLGGIIDDTELIPGLALTQTAVKSAGGPTRIEKANIALIQFQLSPPKPDMENQVVVNDYRQMDKILKEERQYLLNMCKKIKKAGANVILIQKSILRDAVNDLALHFLAKLKIMVIKDIERDEVEFICKSTGCKPIADIESFAEDKLGHADLVEETSSSGEKIVKFSGVKNAGKTVSILCRGANLLTLEEAERSLHDALCVIRCLVKQRALIAGGGSPEIEAAQRLLEHARQLEGREAICIRAFSEALEIIPVTLAENAGLNAIQVVTELRSRHANGEKTAGINVRKGIVTNILEENVLQPLLVNISAIQLAAETTKMIMKIDDITLAR</sequence>
<gene>
    <name type="primary">cct4</name>
    <name type="ORF">SPBC106.06</name>
</gene>
<feature type="chain" id="PRO_0000128343" description="T-complex protein 1 subunit delta">
    <location>
        <begin position="1"/>
        <end position="527"/>
    </location>
</feature>
<feature type="sequence conflict" description="In Ref. 1; AAC05213." evidence="2" ref="1">
    <original>L</original>
    <variation>R</variation>
    <location>
        <position position="78"/>
    </location>
</feature>
<feature type="sequence conflict" description="In Ref. 1; AAC05213." evidence="2" ref="1">
    <location>
        <position position="226"/>
    </location>
</feature>
<feature type="sequence conflict" description="In Ref. 1; AAC05213." evidence="2" ref="1">
    <original>D</original>
    <variation>EV</variation>
    <location>
        <position position="316"/>
    </location>
</feature>
<feature type="sequence conflict" description="In Ref. 1; AAC05213." evidence="2" ref="1">
    <original>R</original>
    <variation>G</variation>
    <location>
        <position position="440"/>
    </location>
</feature>
<feature type="sequence conflict" description="In Ref. 1; AAC05213." evidence="2" ref="1">
    <original>QV</original>
    <variation>RI</variation>
    <location>
        <begin position="463"/>
        <end position="464"/>
    </location>
</feature>
<feature type="sequence conflict" description="In Ref. 1; AAC05213." evidence="2" ref="1">
    <original>SRHANGEKTAGI</original>
    <variation>KSYLREDCGY</variation>
    <location>
        <begin position="470"/>
        <end position="481"/>
    </location>
</feature>